<sequence>MIILGIDEAGRGPLSGPVVAAGVILDQDKIIDGLADSKKLTEKKRQSLYQQIITHAKAYTIVEISPQQIDELNILQATLKAMHQVANNLERQFDKVLVDGNKLPNWDYNSEAIVKGDSKIIEISAASILAKVHRDNICLEHDRLYPQYGFAKHKGYPTKEHLENIKKYGVLDIHRKSYKPVQVLLNE</sequence>
<accession>A4IX19</accession>
<feature type="chain" id="PRO_1000031146" description="Ribonuclease HII">
    <location>
        <begin position="1"/>
        <end position="187"/>
    </location>
</feature>
<feature type="domain" description="RNase H type-2" evidence="2">
    <location>
        <begin position="1"/>
        <end position="187"/>
    </location>
</feature>
<feature type="binding site" evidence="1">
    <location>
        <position position="7"/>
    </location>
    <ligand>
        <name>a divalent metal cation</name>
        <dbReference type="ChEBI" id="CHEBI:60240"/>
    </ligand>
</feature>
<feature type="binding site" evidence="1">
    <location>
        <position position="8"/>
    </location>
    <ligand>
        <name>a divalent metal cation</name>
        <dbReference type="ChEBI" id="CHEBI:60240"/>
    </ligand>
</feature>
<feature type="binding site" evidence="1">
    <location>
        <position position="99"/>
    </location>
    <ligand>
        <name>a divalent metal cation</name>
        <dbReference type="ChEBI" id="CHEBI:60240"/>
    </ligand>
</feature>
<proteinExistence type="inferred from homology"/>
<name>RNH2_FRATW</name>
<gene>
    <name evidence="1" type="primary">rnhB</name>
    <name type="ordered locus">FTW_0562</name>
</gene>
<organism>
    <name type="scientific">Francisella tularensis subsp. tularensis (strain WY96-3418)</name>
    <dbReference type="NCBI Taxonomy" id="418136"/>
    <lineage>
        <taxon>Bacteria</taxon>
        <taxon>Pseudomonadati</taxon>
        <taxon>Pseudomonadota</taxon>
        <taxon>Gammaproteobacteria</taxon>
        <taxon>Thiotrichales</taxon>
        <taxon>Francisellaceae</taxon>
        <taxon>Francisella</taxon>
    </lineage>
</organism>
<comment type="function">
    <text evidence="1">Endonuclease that specifically degrades the RNA of RNA-DNA hybrids.</text>
</comment>
<comment type="catalytic activity">
    <reaction evidence="1">
        <text>Endonucleolytic cleavage to 5'-phosphomonoester.</text>
        <dbReference type="EC" id="3.1.26.4"/>
    </reaction>
</comment>
<comment type="cofactor">
    <cofactor evidence="1">
        <name>Mn(2+)</name>
        <dbReference type="ChEBI" id="CHEBI:29035"/>
    </cofactor>
    <cofactor evidence="1">
        <name>Mg(2+)</name>
        <dbReference type="ChEBI" id="CHEBI:18420"/>
    </cofactor>
    <text evidence="1">Manganese or magnesium. Binds 1 divalent metal ion per monomer in the absence of substrate. May bind a second metal ion after substrate binding.</text>
</comment>
<comment type="subcellular location">
    <subcellularLocation>
        <location evidence="1">Cytoplasm</location>
    </subcellularLocation>
</comment>
<comment type="similarity">
    <text evidence="1">Belongs to the RNase HII family.</text>
</comment>
<dbReference type="EC" id="3.1.26.4" evidence="1"/>
<dbReference type="EMBL" id="CP000608">
    <property type="protein sequence ID" value="ABO46471.1"/>
    <property type="molecule type" value="Genomic_DNA"/>
</dbReference>
<dbReference type="RefSeq" id="WP_003021956.1">
    <property type="nucleotide sequence ID" value="NC_009257.1"/>
</dbReference>
<dbReference type="SMR" id="A4IX19"/>
<dbReference type="KEGG" id="ftw:FTW_0562"/>
<dbReference type="HOGENOM" id="CLU_036532_3_2_6"/>
<dbReference type="GO" id="GO:0005737">
    <property type="term" value="C:cytoplasm"/>
    <property type="evidence" value="ECO:0007669"/>
    <property type="project" value="UniProtKB-SubCell"/>
</dbReference>
<dbReference type="GO" id="GO:0032299">
    <property type="term" value="C:ribonuclease H2 complex"/>
    <property type="evidence" value="ECO:0007669"/>
    <property type="project" value="TreeGrafter"/>
</dbReference>
<dbReference type="GO" id="GO:0030145">
    <property type="term" value="F:manganese ion binding"/>
    <property type="evidence" value="ECO:0007669"/>
    <property type="project" value="UniProtKB-UniRule"/>
</dbReference>
<dbReference type="GO" id="GO:0003723">
    <property type="term" value="F:RNA binding"/>
    <property type="evidence" value="ECO:0007669"/>
    <property type="project" value="InterPro"/>
</dbReference>
<dbReference type="GO" id="GO:0004523">
    <property type="term" value="F:RNA-DNA hybrid ribonuclease activity"/>
    <property type="evidence" value="ECO:0007669"/>
    <property type="project" value="UniProtKB-UniRule"/>
</dbReference>
<dbReference type="GO" id="GO:0043137">
    <property type="term" value="P:DNA replication, removal of RNA primer"/>
    <property type="evidence" value="ECO:0007669"/>
    <property type="project" value="TreeGrafter"/>
</dbReference>
<dbReference type="GO" id="GO:0006298">
    <property type="term" value="P:mismatch repair"/>
    <property type="evidence" value="ECO:0007669"/>
    <property type="project" value="TreeGrafter"/>
</dbReference>
<dbReference type="CDD" id="cd07182">
    <property type="entry name" value="RNase_HII_bacteria_HII_like"/>
    <property type="match status" value="1"/>
</dbReference>
<dbReference type="FunFam" id="3.30.420.10:FF:000006">
    <property type="entry name" value="Ribonuclease HII"/>
    <property type="match status" value="1"/>
</dbReference>
<dbReference type="Gene3D" id="3.30.420.10">
    <property type="entry name" value="Ribonuclease H-like superfamily/Ribonuclease H"/>
    <property type="match status" value="1"/>
</dbReference>
<dbReference type="HAMAP" id="MF_00052_B">
    <property type="entry name" value="RNase_HII_B"/>
    <property type="match status" value="1"/>
</dbReference>
<dbReference type="InterPro" id="IPR022898">
    <property type="entry name" value="RNase_HII"/>
</dbReference>
<dbReference type="InterPro" id="IPR001352">
    <property type="entry name" value="RNase_HII/HIII"/>
</dbReference>
<dbReference type="InterPro" id="IPR024567">
    <property type="entry name" value="RNase_HII/HIII_dom"/>
</dbReference>
<dbReference type="InterPro" id="IPR012337">
    <property type="entry name" value="RNaseH-like_sf"/>
</dbReference>
<dbReference type="InterPro" id="IPR036397">
    <property type="entry name" value="RNaseH_sf"/>
</dbReference>
<dbReference type="NCBIfam" id="NF000595">
    <property type="entry name" value="PRK00015.1-3"/>
    <property type="match status" value="1"/>
</dbReference>
<dbReference type="NCBIfam" id="NF000596">
    <property type="entry name" value="PRK00015.1-4"/>
    <property type="match status" value="1"/>
</dbReference>
<dbReference type="PANTHER" id="PTHR10954">
    <property type="entry name" value="RIBONUCLEASE H2 SUBUNIT A"/>
    <property type="match status" value="1"/>
</dbReference>
<dbReference type="PANTHER" id="PTHR10954:SF18">
    <property type="entry name" value="RIBONUCLEASE HII"/>
    <property type="match status" value="1"/>
</dbReference>
<dbReference type="Pfam" id="PF01351">
    <property type="entry name" value="RNase_HII"/>
    <property type="match status" value="1"/>
</dbReference>
<dbReference type="SUPFAM" id="SSF53098">
    <property type="entry name" value="Ribonuclease H-like"/>
    <property type="match status" value="1"/>
</dbReference>
<dbReference type="PROSITE" id="PS51975">
    <property type="entry name" value="RNASE_H_2"/>
    <property type="match status" value="1"/>
</dbReference>
<keyword id="KW-0963">Cytoplasm</keyword>
<keyword id="KW-0255">Endonuclease</keyword>
<keyword id="KW-0378">Hydrolase</keyword>
<keyword id="KW-0464">Manganese</keyword>
<keyword id="KW-0479">Metal-binding</keyword>
<keyword id="KW-0540">Nuclease</keyword>
<protein>
    <recommendedName>
        <fullName evidence="1">Ribonuclease HII</fullName>
        <shortName evidence="1">RNase HII</shortName>
        <ecNumber evidence="1">3.1.26.4</ecNumber>
    </recommendedName>
</protein>
<reference key="1">
    <citation type="journal article" date="2007" name="PLoS ONE">
        <title>Complete genomic characterization of a pathogenic A.II strain of Francisella tularensis subspecies tularensis.</title>
        <authorList>
            <person name="Beckstrom-Sternberg S.M."/>
            <person name="Auerbach R.K."/>
            <person name="Godbole S."/>
            <person name="Pearson J.V."/>
            <person name="Beckstrom-Sternberg J.S."/>
            <person name="Deng Z."/>
            <person name="Munk C."/>
            <person name="Kubota K."/>
            <person name="Zhou Y."/>
            <person name="Bruce D."/>
            <person name="Noronha J."/>
            <person name="Scheuermann R.H."/>
            <person name="Wang A."/>
            <person name="Wei X."/>
            <person name="Wang J."/>
            <person name="Hao J."/>
            <person name="Wagner D.M."/>
            <person name="Brettin T.S."/>
            <person name="Brown N."/>
            <person name="Gilna P."/>
            <person name="Keim P.S."/>
        </authorList>
    </citation>
    <scope>NUCLEOTIDE SEQUENCE [LARGE SCALE GENOMIC DNA]</scope>
    <source>
        <strain>WY96-3418</strain>
    </source>
</reference>
<evidence type="ECO:0000255" key="1">
    <source>
        <dbReference type="HAMAP-Rule" id="MF_00052"/>
    </source>
</evidence>
<evidence type="ECO:0000255" key="2">
    <source>
        <dbReference type="PROSITE-ProRule" id="PRU01319"/>
    </source>
</evidence>